<organism>
    <name type="scientific">Legionella pneumophila (strain Lens)</name>
    <dbReference type="NCBI Taxonomy" id="297245"/>
    <lineage>
        <taxon>Bacteria</taxon>
        <taxon>Pseudomonadati</taxon>
        <taxon>Pseudomonadota</taxon>
        <taxon>Gammaproteobacteria</taxon>
        <taxon>Legionellales</taxon>
        <taxon>Legionellaceae</taxon>
        <taxon>Legionella</taxon>
    </lineage>
</organism>
<evidence type="ECO:0000255" key="1">
    <source>
        <dbReference type="HAMAP-Rule" id="MF_01631"/>
    </source>
</evidence>
<sequence length="461" mass="50497">MNLQIIILAAGQGKRMYSDTPKVLHHLAGKPLLTHVVETAQQLNPDAIHVIYGHGGEQIKSSLPNLPVHWVHQAEQLGTGHAVLQAMPHIPDDAYVLVLSADVPLIQVETLQSLIECSQRQNPDHSVLALLVAELENPSGLGRIIRNNQGEIYSIVEEKDANEQVKNIKEIYSGVCCTLANNLKKWLPQLSNSNAQGEYYLTEIISFAVQNKTPIRSLTTKNSFEVQGINNRQQLQQLERIWQQRAANQLMEKGVTLADANRFDLRGELYCGKDVYIDINCIFTGKVVLGNGCKIGPNCSLTNVTLGDGCEVYANSVLEGCHIANDCHIGPFARLRSGTQLASHCKIGNFVETKKAIFDEGTKASHLSYLGDVLLGKNVNVGAGTITCNYDGVNKHQTIIEDGVFIGSDTQLVAPVTVGANATIGAGSTIRRNVPPDELTLTESRQKTIYGWKRPAKRERD</sequence>
<gene>
    <name evidence="1" type="primary">glmU</name>
    <name type="ordered locus">lpl2788</name>
</gene>
<reference key="1">
    <citation type="journal article" date="2004" name="Nat. Genet.">
        <title>Evidence in the Legionella pneumophila genome for exploitation of host cell functions and high genome plasticity.</title>
        <authorList>
            <person name="Cazalet C."/>
            <person name="Rusniok C."/>
            <person name="Brueggemann H."/>
            <person name="Zidane N."/>
            <person name="Magnier A."/>
            <person name="Ma L."/>
            <person name="Tichit M."/>
            <person name="Jarraud S."/>
            <person name="Bouchier C."/>
            <person name="Vandenesch F."/>
            <person name="Kunst F."/>
            <person name="Etienne J."/>
            <person name="Glaser P."/>
            <person name="Buchrieser C."/>
        </authorList>
    </citation>
    <scope>NUCLEOTIDE SEQUENCE [LARGE SCALE GENOMIC DNA]</scope>
    <source>
        <strain>Lens</strain>
    </source>
</reference>
<feature type="chain" id="PRO_0000233790" description="Bifunctional protein GlmU">
    <location>
        <begin position="1"/>
        <end position="461"/>
    </location>
</feature>
<feature type="region of interest" description="Pyrophosphorylase" evidence="1">
    <location>
        <begin position="1"/>
        <end position="232"/>
    </location>
</feature>
<feature type="region of interest" description="Linker" evidence="1">
    <location>
        <begin position="233"/>
        <end position="253"/>
    </location>
</feature>
<feature type="region of interest" description="N-acetyltransferase" evidence="1">
    <location>
        <begin position="254"/>
        <end position="461"/>
    </location>
</feature>
<feature type="active site" description="Proton acceptor" evidence="1">
    <location>
        <position position="366"/>
    </location>
</feature>
<feature type="binding site" evidence="1">
    <location>
        <begin position="8"/>
        <end position="11"/>
    </location>
    <ligand>
        <name>UDP-N-acetyl-alpha-D-glucosamine</name>
        <dbReference type="ChEBI" id="CHEBI:57705"/>
    </ligand>
</feature>
<feature type="binding site" evidence="1">
    <location>
        <position position="22"/>
    </location>
    <ligand>
        <name>UDP-N-acetyl-alpha-D-glucosamine</name>
        <dbReference type="ChEBI" id="CHEBI:57705"/>
    </ligand>
</feature>
<feature type="binding site" evidence="1">
    <location>
        <position position="73"/>
    </location>
    <ligand>
        <name>UDP-N-acetyl-alpha-D-glucosamine</name>
        <dbReference type="ChEBI" id="CHEBI:57705"/>
    </ligand>
</feature>
<feature type="binding site" evidence="1">
    <location>
        <begin position="78"/>
        <end position="79"/>
    </location>
    <ligand>
        <name>UDP-N-acetyl-alpha-D-glucosamine</name>
        <dbReference type="ChEBI" id="CHEBI:57705"/>
    </ligand>
</feature>
<feature type="binding site" evidence="1">
    <location>
        <position position="102"/>
    </location>
    <ligand>
        <name>Mg(2+)</name>
        <dbReference type="ChEBI" id="CHEBI:18420"/>
    </ligand>
</feature>
<feature type="binding site" evidence="1">
    <location>
        <position position="142"/>
    </location>
    <ligand>
        <name>UDP-N-acetyl-alpha-D-glucosamine</name>
        <dbReference type="ChEBI" id="CHEBI:57705"/>
    </ligand>
</feature>
<feature type="binding site" evidence="1">
    <location>
        <position position="157"/>
    </location>
    <ligand>
        <name>UDP-N-acetyl-alpha-D-glucosamine</name>
        <dbReference type="ChEBI" id="CHEBI:57705"/>
    </ligand>
</feature>
<feature type="binding site" evidence="1">
    <location>
        <position position="230"/>
    </location>
    <ligand>
        <name>Mg(2+)</name>
        <dbReference type="ChEBI" id="CHEBI:18420"/>
    </ligand>
</feature>
<feature type="binding site" evidence="1">
    <location>
        <position position="230"/>
    </location>
    <ligand>
        <name>UDP-N-acetyl-alpha-D-glucosamine</name>
        <dbReference type="ChEBI" id="CHEBI:57705"/>
    </ligand>
</feature>
<feature type="binding site" evidence="1">
    <location>
        <position position="336"/>
    </location>
    <ligand>
        <name>UDP-N-acetyl-alpha-D-glucosamine</name>
        <dbReference type="ChEBI" id="CHEBI:57705"/>
    </ligand>
</feature>
<feature type="binding site" evidence="1">
    <location>
        <position position="354"/>
    </location>
    <ligand>
        <name>UDP-N-acetyl-alpha-D-glucosamine</name>
        <dbReference type="ChEBI" id="CHEBI:57705"/>
    </ligand>
</feature>
<feature type="binding site" evidence="1">
    <location>
        <position position="369"/>
    </location>
    <ligand>
        <name>UDP-N-acetyl-alpha-D-glucosamine</name>
        <dbReference type="ChEBI" id="CHEBI:57705"/>
    </ligand>
</feature>
<feature type="binding site" evidence="1">
    <location>
        <position position="380"/>
    </location>
    <ligand>
        <name>UDP-N-acetyl-alpha-D-glucosamine</name>
        <dbReference type="ChEBI" id="CHEBI:57705"/>
    </ligand>
</feature>
<feature type="binding site" evidence="1">
    <location>
        <position position="383"/>
    </location>
    <ligand>
        <name>acetyl-CoA</name>
        <dbReference type="ChEBI" id="CHEBI:57288"/>
    </ligand>
</feature>
<feature type="binding site" evidence="1">
    <location>
        <begin position="389"/>
        <end position="390"/>
    </location>
    <ligand>
        <name>acetyl-CoA</name>
        <dbReference type="ChEBI" id="CHEBI:57288"/>
    </ligand>
</feature>
<feature type="binding site" evidence="1">
    <location>
        <position position="408"/>
    </location>
    <ligand>
        <name>acetyl-CoA</name>
        <dbReference type="ChEBI" id="CHEBI:57288"/>
    </ligand>
</feature>
<feature type="binding site" evidence="1">
    <location>
        <position position="426"/>
    </location>
    <ligand>
        <name>acetyl-CoA</name>
        <dbReference type="ChEBI" id="CHEBI:57288"/>
    </ligand>
</feature>
<keyword id="KW-0012">Acyltransferase</keyword>
<keyword id="KW-0133">Cell shape</keyword>
<keyword id="KW-0961">Cell wall biogenesis/degradation</keyword>
<keyword id="KW-0963">Cytoplasm</keyword>
<keyword id="KW-0460">Magnesium</keyword>
<keyword id="KW-0479">Metal-binding</keyword>
<keyword id="KW-0511">Multifunctional enzyme</keyword>
<keyword id="KW-0548">Nucleotidyltransferase</keyword>
<keyword id="KW-0573">Peptidoglycan synthesis</keyword>
<keyword id="KW-0677">Repeat</keyword>
<keyword id="KW-0808">Transferase</keyword>
<dbReference type="EC" id="2.7.7.23" evidence="1"/>
<dbReference type="EC" id="2.3.1.157" evidence="1"/>
<dbReference type="EMBL" id="CR628337">
    <property type="protein sequence ID" value="CAH17031.1"/>
    <property type="molecule type" value="Genomic_DNA"/>
</dbReference>
<dbReference type="RefSeq" id="WP_011216709.1">
    <property type="nucleotide sequence ID" value="NC_006369.1"/>
</dbReference>
<dbReference type="SMR" id="Q5WST8"/>
<dbReference type="KEGG" id="lpf:lpl2788"/>
<dbReference type="LegioList" id="lpl2788"/>
<dbReference type="HOGENOM" id="CLU_029499_15_2_6"/>
<dbReference type="UniPathway" id="UPA00113">
    <property type="reaction ID" value="UER00532"/>
</dbReference>
<dbReference type="UniPathway" id="UPA00113">
    <property type="reaction ID" value="UER00533"/>
</dbReference>
<dbReference type="UniPathway" id="UPA00973"/>
<dbReference type="Proteomes" id="UP000002517">
    <property type="component" value="Chromosome"/>
</dbReference>
<dbReference type="GO" id="GO:0005737">
    <property type="term" value="C:cytoplasm"/>
    <property type="evidence" value="ECO:0007669"/>
    <property type="project" value="UniProtKB-SubCell"/>
</dbReference>
<dbReference type="GO" id="GO:0016020">
    <property type="term" value="C:membrane"/>
    <property type="evidence" value="ECO:0007669"/>
    <property type="project" value="GOC"/>
</dbReference>
<dbReference type="GO" id="GO:0019134">
    <property type="term" value="F:glucosamine-1-phosphate N-acetyltransferase activity"/>
    <property type="evidence" value="ECO:0007669"/>
    <property type="project" value="UniProtKB-UniRule"/>
</dbReference>
<dbReference type="GO" id="GO:0000287">
    <property type="term" value="F:magnesium ion binding"/>
    <property type="evidence" value="ECO:0007669"/>
    <property type="project" value="UniProtKB-UniRule"/>
</dbReference>
<dbReference type="GO" id="GO:0003977">
    <property type="term" value="F:UDP-N-acetylglucosamine diphosphorylase activity"/>
    <property type="evidence" value="ECO:0007669"/>
    <property type="project" value="UniProtKB-UniRule"/>
</dbReference>
<dbReference type="GO" id="GO:0000902">
    <property type="term" value="P:cell morphogenesis"/>
    <property type="evidence" value="ECO:0007669"/>
    <property type="project" value="UniProtKB-UniRule"/>
</dbReference>
<dbReference type="GO" id="GO:0071555">
    <property type="term" value="P:cell wall organization"/>
    <property type="evidence" value="ECO:0007669"/>
    <property type="project" value="UniProtKB-KW"/>
</dbReference>
<dbReference type="GO" id="GO:0009245">
    <property type="term" value="P:lipid A biosynthetic process"/>
    <property type="evidence" value="ECO:0007669"/>
    <property type="project" value="UniProtKB-UniRule"/>
</dbReference>
<dbReference type="GO" id="GO:0009252">
    <property type="term" value="P:peptidoglycan biosynthetic process"/>
    <property type="evidence" value="ECO:0007669"/>
    <property type="project" value="UniProtKB-UniRule"/>
</dbReference>
<dbReference type="GO" id="GO:0008360">
    <property type="term" value="P:regulation of cell shape"/>
    <property type="evidence" value="ECO:0007669"/>
    <property type="project" value="UniProtKB-KW"/>
</dbReference>
<dbReference type="GO" id="GO:0006048">
    <property type="term" value="P:UDP-N-acetylglucosamine biosynthetic process"/>
    <property type="evidence" value="ECO:0007669"/>
    <property type="project" value="UniProtKB-UniPathway"/>
</dbReference>
<dbReference type="CDD" id="cd02540">
    <property type="entry name" value="GT2_GlmU_N_bac"/>
    <property type="match status" value="1"/>
</dbReference>
<dbReference type="CDD" id="cd03353">
    <property type="entry name" value="LbH_GlmU_C"/>
    <property type="match status" value="1"/>
</dbReference>
<dbReference type="Gene3D" id="2.160.10.10">
    <property type="entry name" value="Hexapeptide repeat proteins"/>
    <property type="match status" value="1"/>
</dbReference>
<dbReference type="Gene3D" id="3.90.550.10">
    <property type="entry name" value="Spore Coat Polysaccharide Biosynthesis Protein SpsA, Chain A"/>
    <property type="match status" value="1"/>
</dbReference>
<dbReference type="HAMAP" id="MF_01631">
    <property type="entry name" value="GlmU"/>
    <property type="match status" value="1"/>
</dbReference>
<dbReference type="InterPro" id="IPR005882">
    <property type="entry name" value="Bifunctional_GlmU"/>
</dbReference>
<dbReference type="InterPro" id="IPR050065">
    <property type="entry name" value="GlmU-like"/>
</dbReference>
<dbReference type="InterPro" id="IPR038009">
    <property type="entry name" value="GlmU_C_LbH"/>
</dbReference>
<dbReference type="InterPro" id="IPR001451">
    <property type="entry name" value="Hexapep"/>
</dbReference>
<dbReference type="InterPro" id="IPR018357">
    <property type="entry name" value="Hexapep_transf_CS"/>
</dbReference>
<dbReference type="InterPro" id="IPR025877">
    <property type="entry name" value="MobA-like_NTP_Trfase"/>
</dbReference>
<dbReference type="InterPro" id="IPR029044">
    <property type="entry name" value="Nucleotide-diphossugar_trans"/>
</dbReference>
<dbReference type="InterPro" id="IPR011004">
    <property type="entry name" value="Trimer_LpxA-like_sf"/>
</dbReference>
<dbReference type="NCBIfam" id="TIGR01173">
    <property type="entry name" value="glmU"/>
    <property type="match status" value="1"/>
</dbReference>
<dbReference type="PANTHER" id="PTHR43584:SF3">
    <property type="entry name" value="BIFUNCTIONAL PROTEIN GLMU"/>
    <property type="match status" value="1"/>
</dbReference>
<dbReference type="PANTHER" id="PTHR43584">
    <property type="entry name" value="NUCLEOTIDYL TRANSFERASE"/>
    <property type="match status" value="1"/>
</dbReference>
<dbReference type="Pfam" id="PF00132">
    <property type="entry name" value="Hexapep"/>
    <property type="match status" value="2"/>
</dbReference>
<dbReference type="Pfam" id="PF12804">
    <property type="entry name" value="NTP_transf_3"/>
    <property type="match status" value="1"/>
</dbReference>
<dbReference type="SUPFAM" id="SSF53448">
    <property type="entry name" value="Nucleotide-diphospho-sugar transferases"/>
    <property type="match status" value="1"/>
</dbReference>
<dbReference type="SUPFAM" id="SSF51161">
    <property type="entry name" value="Trimeric LpxA-like enzymes"/>
    <property type="match status" value="1"/>
</dbReference>
<dbReference type="PROSITE" id="PS00101">
    <property type="entry name" value="HEXAPEP_TRANSFERASES"/>
    <property type="match status" value="1"/>
</dbReference>
<accession>Q5WST8</accession>
<name>GLMU_LEGPL</name>
<comment type="function">
    <text evidence="1">Catalyzes the last two sequential reactions in the de novo biosynthetic pathway for UDP-N-acetylglucosamine (UDP-GlcNAc). The C-terminal domain catalyzes the transfer of acetyl group from acetyl coenzyme A to glucosamine-1-phosphate (GlcN-1-P) to produce N-acetylglucosamine-1-phosphate (GlcNAc-1-P), which is converted into UDP-GlcNAc by the transfer of uridine 5-monophosphate (from uridine 5-triphosphate), a reaction catalyzed by the N-terminal domain.</text>
</comment>
<comment type="catalytic activity">
    <reaction evidence="1">
        <text>alpha-D-glucosamine 1-phosphate + acetyl-CoA = N-acetyl-alpha-D-glucosamine 1-phosphate + CoA + H(+)</text>
        <dbReference type="Rhea" id="RHEA:13725"/>
        <dbReference type="ChEBI" id="CHEBI:15378"/>
        <dbReference type="ChEBI" id="CHEBI:57287"/>
        <dbReference type="ChEBI" id="CHEBI:57288"/>
        <dbReference type="ChEBI" id="CHEBI:57776"/>
        <dbReference type="ChEBI" id="CHEBI:58516"/>
        <dbReference type="EC" id="2.3.1.157"/>
    </reaction>
</comment>
<comment type="catalytic activity">
    <reaction evidence="1">
        <text>N-acetyl-alpha-D-glucosamine 1-phosphate + UTP + H(+) = UDP-N-acetyl-alpha-D-glucosamine + diphosphate</text>
        <dbReference type="Rhea" id="RHEA:13509"/>
        <dbReference type="ChEBI" id="CHEBI:15378"/>
        <dbReference type="ChEBI" id="CHEBI:33019"/>
        <dbReference type="ChEBI" id="CHEBI:46398"/>
        <dbReference type="ChEBI" id="CHEBI:57705"/>
        <dbReference type="ChEBI" id="CHEBI:57776"/>
        <dbReference type="EC" id="2.7.7.23"/>
    </reaction>
</comment>
<comment type="cofactor">
    <cofactor evidence="1">
        <name>Mg(2+)</name>
        <dbReference type="ChEBI" id="CHEBI:18420"/>
    </cofactor>
    <text evidence="1">Binds 1 Mg(2+) ion per subunit.</text>
</comment>
<comment type="pathway">
    <text evidence="1">Nucleotide-sugar biosynthesis; UDP-N-acetyl-alpha-D-glucosamine biosynthesis; N-acetyl-alpha-D-glucosamine 1-phosphate from alpha-D-glucosamine 6-phosphate (route II): step 2/2.</text>
</comment>
<comment type="pathway">
    <text evidence="1">Nucleotide-sugar biosynthesis; UDP-N-acetyl-alpha-D-glucosamine biosynthesis; UDP-N-acetyl-alpha-D-glucosamine from N-acetyl-alpha-D-glucosamine 1-phosphate: step 1/1.</text>
</comment>
<comment type="pathway">
    <text evidence="1">Bacterial outer membrane biogenesis; LPS lipid A biosynthesis.</text>
</comment>
<comment type="subunit">
    <text evidence="1">Homotrimer.</text>
</comment>
<comment type="subcellular location">
    <subcellularLocation>
        <location evidence="1">Cytoplasm</location>
    </subcellularLocation>
</comment>
<comment type="similarity">
    <text evidence="1">In the N-terminal section; belongs to the N-acetylglucosamine-1-phosphate uridyltransferase family.</text>
</comment>
<comment type="similarity">
    <text evidence="1">In the C-terminal section; belongs to the transferase hexapeptide repeat family.</text>
</comment>
<proteinExistence type="inferred from homology"/>
<protein>
    <recommendedName>
        <fullName evidence="1">Bifunctional protein GlmU</fullName>
    </recommendedName>
    <domain>
        <recommendedName>
            <fullName evidence="1">UDP-N-acetylglucosamine pyrophosphorylase</fullName>
            <ecNumber evidence="1">2.7.7.23</ecNumber>
        </recommendedName>
        <alternativeName>
            <fullName evidence="1">N-acetylglucosamine-1-phosphate uridyltransferase</fullName>
        </alternativeName>
    </domain>
    <domain>
        <recommendedName>
            <fullName evidence="1">Glucosamine-1-phosphate N-acetyltransferase</fullName>
            <ecNumber evidence="1">2.3.1.157</ecNumber>
        </recommendedName>
    </domain>
</protein>